<dbReference type="EC" id="6.1.1.19" evidence="1"/>
<dbReference type="EMBL" id="BX936398">
    <property type="protein sequence ID" value="CAH21267.1"/>
    <property type="molecule type" value="Genomic_DNA"/>
</dbReference>
<dbReference type="RefSeq" id="WP_011192408.1">
    <property type="nucleotide sequence ID" value="NC_006155.1"/>
</dbReference>
<dbReference type="SMR" id="Q66AV1"/>
<dbReference type="KEGG" id="ypo:BZ17_436"/>
<dbReference type="KEGG" id="yps:YPTB2029"/>
<dbReference type="PATRIC" id="fig|273123.14.peg.466"/>
<dbReference type="Proteomes" id="UP000001011">
    <property type="component" value="Chromosome"/>
</dbReference>
<dbReference type="GO" id="GO:0005737">
    <property type="term" value="C:cytoplasm"/>
    <property type="evidence" value="ECO:0007669"/>
    <property type="project" value="UniProtKB-SubCell"/>
</dbReference>
<dbReference type="GO" id="GO:0004814">
    <property type="term" value="F:arginine-tRNA ligase activity"/>
    <property type="evidence" value="ECO:0007669"/>
    <property type="project" value="UniProtKB-UniRule"/>
</dbReference>
<dbReference type="GO" id="GO:0005524">
    <property type="term" value="F:ATP binding"/>
    <property type="evidence" value="ECO:0007669"/>
    <property type="project" value="UniProtKB-UniRule"/>
</dbReference>
<dbReference type="GO" id="GO:0006420">
    <property type="term" value="P:arginyl-tRNA aminoacylation"/>
    <property type="evidence" value="ECO:0007669"/>
    <property type="project" value="UniProtKB-UniRule"/>
</dbReference>
<dbReference type="CDD" id="cd07956">
    <property type="entry name" value="Anticodon_Ia_Arg"/>
    <property type="match status" value="1"/>
</dbReference>
<dbReference type="CDD" id="cd00671">
    <property type="entry name" value="ArgRS_core"/>
    <property type="match status" value="1"/>
</dbReference>
<dbReference type="FunFam" id="1.10.730.10:FF:000001">
    <property type="entry name" value="Arginine--tRNA ligase"/>
    <property type="match status" value="1"/>
</dbReference>
<dbReference type="FunFam" id="3.30.1360.70:FF:000001">
    <property type="entry name" value="Arginine--tRNA ligase"/>
    <property type="match status" value="1"/>
</dbReference>
<dbReference type="FunFam" id="3.40.50.620:FF:000030">
    <property type="entry name" value="Arginine--tRNA ligase"/>
    <property type="match status" value="1"/>
</dbReference>
<dbReference type="Gene3D" id="3.30.1360.70">
    <property type="entry name" value="Arginyl tRNA synthetase N-terminal domain"/>
    <property type="match status" value="1"/>
</dbReference>
<dbReference type="Gene3D" id="3.40.50.620">
    <property type="entry name" value="HUPs"/>
    <property type="match status" value="1"/>
</dbReference>
<dbReference type="Gene3D" id="1.10.730.10">
    <property type="entry name" value="Isoleucyl-tRNA Synthetase, Domain 1"/>
    <property type="match status" value="1"/>
</dbReference>
<dbReference type="HAMAP" id="MF_00123">
    <property type="entry name" value="Arg_tRNA_synth"/>
    <property type="match status" value="1"/>
</dbReference>
<dbReference type="InterPro" id="IPR001412">
    <property type="entry name" value="aa-tRNA-synth_I_CS"/>
</dbReference>
<dbReference type="InterPro" id="IPR001278">
    <property type="entry name" value="Arg-tRNA-ligase"/>
</dbReference>
<dbReference type="InterPro" id="IPR005148">
    <property type="entry name" value="Arg-tRNA-synth_N"/>
</dbReference>
<dbReference type="InterPro" id="IPR036695">
    <property type="entry name" value="Arg-tRNA-synth_N_sf"/>
</dbReference>
<dbReference type="InterPro" id="IPR035684">
    <property type="entry name" value="ArgRS_core"/>
</dbReference>
<dbReference type="InterPro" id="IPR008909">
    <property type="entry name" value="DALR_anticod-bd"/>
</dbReference>
<dbReference type="InterPro" id="IPR014729">
    <property type="entry name" value="Rossmann-like_a/b/a_fold"/>
</dbReference>
<dbReference type="InterPro" id="IPR009080">
    <property type="entry name" value="tRNAsynth_Ia_anticodon-bd"/>
</dbReference>
<dbReference type="NCBIfam" id="TIGR00456">
    <property type="entry name" value="argS"/>
    <property type="match status" value="1"/>
</dbReference>
<dbReference type="PANTHER" id="PTHR11956:SF5">
    <property type="entry name" value="ARGININE--TRNA LIGASE, CYTOPLASMIC"/>
    <property type="match status" value="1"/>
</dbReference>
<dbReference type="PANTHER" id="PTHR11956">
    <property type="entry name" value="ARGINYL-TRNA SYNTHETASE"/>
    <property type="match status" value="1"/>
</dbReference>
<dbReference type="Pfam" id="PF03485">
    <property type="entry name" value="Arg_tRNA_synt_N"/>
    <property type="match status" value="1"/>
</dbReference>
<dbReference type="Pfam" id="PF05746">
    <property type="entry name" value="DALR_1"/>
    <property type="match status" value="1"/>
</dbReference>
<dbReference type="Pfam" id="PF00750">
    <property type="entry name" value="tRNA-synt_1d"/>
    <property type="match status" value="1"/>
</dbReference>
<dbReference type="PRINTS" id="PR01038">
    <property type="entry name" value="TRNASYNTHARG"/>
</dbReference>
<dbReference type="SMART" id="SM01016">
    <property type="entry name" value="Arg_tRNA_synt_N"/>
    <property type="match status" value="1"/>
</dbReference>
<dbReference type="SMART" id="SM00836">
    <property type="entry name" value="DALR_1"/>
    <property type="match status" value="1"/>
</dbReference>
<dbReference type="SUPFAM" id="SSF47323">
    <property type="entry name" value="Anticodon-binding domain of a subclass of class I aminoacyl-tRNA synthetases"/>
    <property type="match status" value="1"/>
</dbReference>
<dbReference type="SUPFAM" id="SSF55190">
    <property type="entry name" value="Arginyl-tRNA synthetase (ArgRS), N-terminal 'additional' domain"/>
    <property type="match status" value="1"/>
</dbReference>
<dbReference type="SUPFAM" id="SSF52374">
    <property type="entry name" value="Nucleotidylyl transferase"/>
    <property type="match status" value="1"/>
</dbReference>
<dbReference type="PROSITE" id="PS00178">
    <property type="entry name" value="AA_TRNA_LIGASE_I"/>
    <property type="match status" value="1"/>
</dbReference>
<comment type="catalytic activity">
    <reaction evidence="1">
        <text>tRNA(Arg) + L-arginine + ATP = L-arginyl-tRNA(Arg) + AMP + diphosphate</text>
        <dbReference type="Rhea" id="RHEA:20301"/>
        <dbReference type="Rhea" id="RHEA-COMP:9658"/>
        <dbReference type="Rhea" id="RHEA-COMP:9673"/>
        <dbReference type="ChEBI" id="CHEBI:30616"/>
        <dbReference type="ChEBI" id="CHEBI:32682"/>
        <dbReference type="ChEBI" id="CHEBI:33019"/>
        <dbReference type="ChEBI" id="CHEBI:78442"/>
        <dbReference type="ChEBI" id="CHEBI:78513"/>
        <dbReference type="ChEBI" id="CHEBI:456215"/>
        <dbReference type="EC" id="6.1.1.19"/>
    </reaction>
</comment>
<comment type="subunit">
    <text evidence="1">Monomer.</text>
</comment>
<comment type="subcellular location">
    <subcellularLocation>
        <location evidence="1">Cytoplasm</location>
    </subcellularLocation>
</comment>
<comment type="similarity">
    <text evidence="1">Belongs to the class-I aminoacyl-tRNA synthetase family.</text>
</comment>
<name>SYR_YERPS</name>
<evidence type="ECO:0000255" key="1">
    <source>
        <dbReference type="HAMAP-Rule" id="MF_00123"/>
    </source>
</evidence>
<keyword id="KW-0030">Aminoacyl-tRNA synthetase</keyword>
<keyword id="KW-0067">ATP-binding</keyword>
<keyword id="KW-0963">Cytoplasm</keyword>
<keyword id="KW-0436">Ligase</keyword>
<keyword id="KW-0547">Nucleotide-binding</keyword>
<keyword id="KW-0648">Protein biosynthesis</keyword>
<proteinExistence type="inferred from homology"/>
<protein>
    <recommendedName>
        <fullName evidence="1">Arginine--tRNA ligase</fullName>
        <ecNumber evidence="1">6.1.1.19</ecNumber>
    </recommendedName>
    <alternativeName>
        <fullName evidence="1">Arginyl-tRNA synthetase</fullName>
        <shortName evidence="1">ArgRS</shortName>
    </alternativeName>
</protein>
<accession>Q66AV1</accession>
<sequence length="576" mass="64126">MNIQALLSDKVSQALIAAGAPADCEAQVRQSAKAQFGDYQANGVMAVAKKLGMQPRQLAERVVELLDLTGIASKIEIAGPGFINIFLDRQWVAEKVEYALTAPKLGVAPVEPQTIVVDYSAPNVAKQMHVGHLRSTIIGDAAVRTLAFLGHNVIRANHVGDWGTQFGMLIAYLEKMQNENASDMGLSDLELFYQQAKKTYDEDEEFALRARAYVVKLQSGDEYCRQMWRKLVDITMAQNQVAYDRLNVTLTKDDVMGESLYNAMLPEIVADLKAKGLAVESEGATVVYLDEYKNKDGEPMGVIIQKKDGGYLYTTTDIACAKYRYETLGADRILYYIDSRQHQHLMQAWTIVRKAGYVPESVPLEHHMFGMMLGKDGKPFKTRSGGTVKLSDLLDEAVERAGKLIAEKNPDMPADELKQVINAVGIGAVKYADLSKSRTTDYIFDWDNMLALDGNTAPYMQYAYTRVVSVFRRAGVDETSLTLPLVITEDREAALATRLLQFEEIITTVAREGTPHVMCSYLYDLAGLFSSFYEHCQILNAESEEIRQSRLKLAMLTAKTLKQGLDTLGIQTVERM</sequence>
<feature type="chain" id="PRO_0000242127" description="Arginine--tRNA ligase">
    <location>
        <begin position="1"/>
        <end position="576"/>
    </location>
</feature>
<feature type="short sequence motif" description="'HIGH' region">
    <location>
        <begin position="122"/>
        <end position="132"/>
    </location>
</feature>
<reference key="1">
    <citation type="journal article" date="2004" name="Proc. Natl. Acad. Sci. U.S.A.">
        <title>Insights into the evolution of Yersinia pestis through whole-genome comparison with Yersinia pseudotuberculosis.</title>
        <authorList>
            <person name="Chain P.S.G."/>
            <person name="Carniel E."/>
            <person name="Larimer F.W."/>
            <person name="Lamerdin J."/>
            <person name="Stoutland P.O."/>
            <person name="Regala W.M."/>
            <person name="Georgescu A.M."/>
            <person name="Vergez L.M."/>
            <person name="Land M.L."/>
            <person name="Motin V.L."/>
            <person name="Brubaker R.R."/>
            <person name="Fowler J."/>
            <person name="Hinnebusch J."/>
            <person name="Marceau M."/>
            <person name="Medigue C."/>
            <person name="Simonet M."/>
            <person name="Chenal-Francisque V."/>
            <person name="Souza B."/>
            <person name="Dacheux D."/>
            <person name="Elliott J.M."/>
            <person name="Derbise A."/>
            <person name="Hauser L.J."/>
            <person name="Garcia E."/>
        </authorList>
    </citation>
    <scope>NUCLEOTIDE SEQUENCE [LARGE SCALE GENOMIC DNA]</scope>
    <source>
        <strain>IP32953</strain>
    </source>
</reference>
<organism>
    <name type="scientific">Yersinia pseudotuberculosis serotype I (strain IP32953)</name>
    <dbReference type="NCBI Taxonomy" id="273123"/>
    <lineage>
        <taxon>Bacteria</taxon>
        <taxon>Pseudomonadati</taxon>
        <taxon>Pseudomonadota</taxon>
        <taxon>Gammaproteobacteria</taxon>
        <taxon>Enterobacterales</taxon>
        <taxon>Yersiniaceae</taxon>
        <taxon>Yersinia</taxon>
    </lineage>
</organism>
<gene>
    <name evidence="1" type="primary">argS</name>
    <name type="ordered locus">YPTB2029</name>
</gene>